<proteinExistence type="inferred from homology"/>
<dbReference type="EMBL" id="CP000046">
    <property type="protein sequence ID" value="AAW38801.1"/>
    <property type="molecule type" value="Genomic_DNA"/>
</dbReference>
<dbReference type="RefSeq" id="WP_000645452.1">
    <property type="nucleotide sequence ID" value="NZ_JBGOFO010000001.1"/>
</dbReference>
<dbReference type="SMR" id="Q5HJB5"/>
<dbReference type="KEGG" id="sac:SACOL0246"/>
<dbReference type="HOGENOM" id="CLU_000445_14_1_9"/>
<dbReference type="Proteomes" id="UP000000530">
    <property type="component" value="Chromosome"/>
</dbReference>
<dbReference type="GO" id="GO:0005737">
    <property type="term" value="C:cytoplasm"/>
    <property type="evidence" value="ECO:0007669"/>
    <property type="project" value="UniProtKB-SubCell"/>
</dbReference>
<dbReference type="GO" id="GO:0003677">
    <property type="term" value="F:DNA binding"/>
    <property type="evidence" value="ECO:0007669"/>
    <property type="project" value="UniProtKB-KW"/>
</dbReference>
<dbReference type="GO" id="GO:0000156">
    <property type="term" value="F:phosphorelay response regulator activity"/>
    <property type="evidence" value="ECO:0007669"/>
    <property type="project" value="InterPro"/>
</dbReference>
<dbReference type="CDD" id="cd17532">
    <property type="entry name" value="REC_LytTR_AlgR-like"/>
    <property type="match status" value="1"/>
</dbReference>
<dbReference type="FunFam" id="3.40.50.2300:FF:000134">
    <property type="entry name" value="Autolysin response regulator LytR"/>
    <property type="match status" value="1"/>
</dbReference>
<dbReference type="Gene3D" id="3.40.50.2300">
    <property type="match status" value="1"/>
</dbReference>
<dbReference type="Gene3D" id="2.40.50.1020">
    <property type="entry name" value="LytTr DNA-binding domain"/>
    <property type="match status" value="1"/>
</dbReference>
<dbReference type="InterPro" id="IPR011006">
    <property type="entry name" value="CheY-like_superfamily"/>
</dbReference>
<dbReference type="InterPro" id="IPR046947">
    <property type="entry name" value="LytR-like"/>
</dbReference>
<dbReference type="InterPro" id="IPR007492">
    <property type="entry name" value="LytTR_DNA-bd_dom"/>
</dbReference>
<dbReference type="InterPro" id="IPR001789">
    <property type="entry name" value="Sig_transdc_resp-reg_receiver"/>
</dbReference>
<dbReference type="NCBIfam" id="NF010684">
    <property type="entry name" value="PRK14084.1"/>
    <property type="match status" value="1"/>
</dbReference>
<dbReference type="PANTHER" id="PTHR37299:SF1">
    <property type="entry name" value="STAGE 0 SPORULATION PROTEIN A HOMOLOG"/>
    <property type="match status" value="1"/>
</dbReference>
<dbReference type="PANTHER" id="PTHR37299">
    <property type="entry name" value="TRANSCRIPTIONAL REGULATOR-RELATED"/>
    <property type="match status" value="1"/>
</dbReference>
<dbReference type="Pfam" id="PF04397">
    <property type="entry name" value="LytTR"/>
    <property type="match status" value="1"/>
</dbReference>
<dbReference type="Pfam" id="PF00072">
    <property type="entry name" value="Response_reg"/>
    <property type="match status" value="1"/>
</dbReference>
<dbReference type="SMART" id="SM00850">
    <property type="entry name" value="LytTR"/>
    <property type="match status" value="1"/>
</dbReference>
<dbReference type="SMART" id="SM00448">
    <property type="entry name" value="REC"/>
    <property type="match status" value="1"/>
</dbReference>
<dbReference type="SUPFAM" id="SSF52172">
    <property type="entry name" value="CheY-like"/>
    <property type="match status" value="1"/>
</dbReference>
<dbReference type="PROSITE" id="PS50930">
    <property type="entry name" value="HTH_LYTTR"/>
    <property type="match status" value="1"/>
</dbReference>
<dbReference type="PROSITE" id="PS50110">
    <property type="entry name" value="RESPONSE_REGULATORY"/>
    <property type="match status" value="1"/>
</dbReference>
<accession>Q5HJB5</accession>
<comment type="function">
    <text evidence="3">Member of the two-component regulatory system LytR/LytS that regulates genes involved in autolysis, programmed cell death, biofilm formation and cell wall metabolism. Also participates in sensing and responding to host defense cationic antimicrobial peptides (HDPs). Upon phosphorylation by LytS, functions as a transcription regulator by direct binding to promoter regions of target genes including lrgA and lrgB, to positively regulate their expression.</text>
</comment>
<comment type="subunit">
    <text evidence="2">Homodimer; when phosphorylated.</text>
</comment>
<comment type="subcellular location">
    <subcellularLocation>
        <location evidence="1">Cytoplasm</location>
    </subcellularLocation>
</comment>
<comment type="PTM">
    <text evidence="2">Phosphorylated and dephosphorylated by LytS.</text>
</comment>
<organism>
    <name type="scientific">Staphylococcus aureus (strain COL)</name>
    <dbReference type="NCBI Taxonomy" id="93062"/>
    <lineage>
        <taxon>Bacteria</taxon>
        <taxon>Bacillati</taxon>
        <taxon>Bacillota</taxon>
        <taxon>Bacilli</taxon>
        <taxon>Bacillales</taxon>
        <taxon>Staphylococcaceae</taxon>
        <taxon>Staphylococcus</taxon>
    </lineage>
</organism>
<gene>
    <name type="primary">lytR</name>
    <name type="ordered locus">SACOL0246</name>
</gene>
<feature type="chain" id="PRO_0000081126" description="Transcriptional regulatory protein LytR">
    <location>
        <begin position="1"/>
        <end position="246"/>
    </location>
</feature>
<feature type="domain" description="Response regulatory" evidence="5">
    <location>
        <begin position="2"/>
        <end position="116"/>
    </location>
</feature>
<feature type="domain" description="HTH LytTR-type" evidence="4">
    <location>
        <begin position="141"/>
        <end position="245"/>
    </location>
</feature>
<feature type="modified residue" description="4-aspartylphosphate" evidence="5">
    <location>
        <position position="53"/>
    </location>
</feature>
<sequence length="246" mass="28221">MKALIIDDEPLARNELTYLLNEIGGFEEINEAENVKETLEALLINQYDIIFLDVNLMDENGIELGAKIQKMKEPPAIIFATAHDQYAVQAFELNATDYILKPFGQKRIEQAVNKVRATKAKDDNNASAIANDMSANFDQSLPVEIDDKIHMLKQQNIIGIGTHNGITTIHTTNHKYETTEPLNRYEKRLNPTYFIRIHRSYIINTKHIKEVQQWFNYTYMVILTNGVKMQVGRSFMKDFKASIGLL</sequence>
<name>LYTR_STAAC</name>
<keyword id="KW-0963">Cytoplasm</keyword>
<keyword id="KW-0238">DNA-binding</keyword>
<keyword id="KW-0597">Phosphoprotein</keyword>
<keyword id="KW-0804">Transcription</keyword>
<keyword id="KW-0805">Transcription regulation</keyword>
<keyword id="KW-0902">Two-component regulatory system</keyword>
<reference key="1">
    <citation type="journal article" date="2005" name="J. Bacteriol.">
        <title>Insights on evolution of virulence and resistance from the complete genome analysis of an early methicillin-resistant Staphylococcus aureus strain and a biofilm-producing methicillin-resistant Staphylococcus epidermidis strain.</title>
        <authorList>
            <person name="Gill S.R."/>
            <person name="Fouts D.E."/>
            <person name="Archer G.L."/>
            <person name="Mongodin E.F."/>
            <person name="DeBoy R.T."/>
            <person name="Ravel J."/>
            <person name="Paulsen I.T."/>
            <person name="Kolonay J.F."/>
            <person name="Brinkac L.M."/>
            <person name="Beanan M.J."/>
            <person name="Dodson R.J."/>
            <person name="Daugherty S.C."/>
            <person name="Madupu R."/>
            <person name="Angiuoli S.V."/>
            <person name="Durkin A.S."/>
            <person name="Haft D.H."/>
            <person name="Vamathevan J.J."/>
            <person name="Khouri H."/>
            <person name="Utterback T.R."/>
            <person name="Lee C."/>
            <person name="Dimitrov G."/>
            <person name="Jiang L."/>
            <person name="Qin H."/>
            <person name="Weidman J."/>
            <person name="Tran K."/>
            <person name="Kang K.H."/>
            <person name="Hance I.R."/>
            <person name="Nelson K.E."/>
            <person name="Fraser C.M."/>
        </authorList>
    </citation>
    <scope>NUCLEOTIDE SEQUENCE [LARGE SCALE GENOMIC DNA]</scope>
    <source>
        <strain>COL</strain>
    </source>
</reference>
<evidence type="ECO:0000250" key="1"/>
<evidence type="ECO:0000250" key="2">
    <source>
        <dbReference type="UniProtKB" id="P60609"/>
    </source>
</evidence>
<evidence type="ECO:0000250" key="3">
    <source>
        <dbReference type="UniProtKB" id="P60611"/>
    </source>
</evidence>
<evidence type="ECO:0000255" key="4">
    <source>
        <dbReference type="PROSITE-ProRule" id="PRU00112"/>
    </source>
</evidence>
<evidence type="ECO:0000255" key="5">
    <source>
        <dbReference type="PROSITE-ProRule" id="PRU00169"/>
    </source>
</evidence>
<protein>
    <recommendedName>
        <fullName>Transcriptional regulatory protein LytR</fullName>
    </recommendedName>
    <alternativeName>
        <fullName>Sensory transduction protein LytR</fullName>
    </alternativeName>
</protein>